<organism>
    <name type="scientific">Ovis aries</name>
    <name type="common">Sheep</name>
    <dbReference type="NCBI Taxonomy" id="9940"/>
    <lineage>
        <taxon>Eukaryota</taxon>
        <taxon>Metazoa</taxon>
        <taxon>Chordata</taxon>
        <taxon>Craniata</taxon>
        <taxon>Vertebrata</taxon>
        <taxon>Euteleostomi</taxon>
        <taxon>Mammalia</taxon>
        <taxon>Eutheria</taxon>
        <taxon>Laurasiatheria</taxon>
        <taxon>Artiodactyla</taxon>
        <taxon>Ruminantia</taxon>
        <taxon>Pecora</taxon>
        <taxon>Bovidae</taxon>
        <taxon>Caprinae</taxon>
        <taxon>Ovis</taxon>
    </lineage>
</organism>
<sequence>MSSSLEITSFYSFIWTPHIGPLLFGIGLWFSMFKEPSHFCPCQHPHFVEVVIPCDSLSRSLRLRVIVLFLAIFFPLLNI</sequence>
<reference key="1">
    <citation type="journal article" date="1983" name="Nucleic Acids Res.">
        <title>Mammalian keratin gene families: organisation of genes coding for the B2 high-sulphur proteins of sheep wool.</title>
        <authorList>
            <person name="Powell B.C."/>
            <person name="Sleigh M.J."/>
            <person name="Ward K.A."/>
            <person name="Rogers G.E."/>
        </authorList>
    </citation>
    <scope>NUCLEOTIDE SEQUENCE [GENOMIC DNA]</scope>
</reference>
<proteinExistence type="predicted"/>
<dbReference type="EMBL" id="X01610">
    <property type="protein sequence ID" value="CAA25758.1"/>
    <property type="molecule type" value="Genomic_DNA"/>
</dbReference>
<dbReference type="PIR" id="S07912">
    <property type="entry name" value="S07912"/>
</dbReference>
<dbReference type="Proteomes" id="UP000002356">
    <property type="component" value="Unplaced"/>
</dbReference>
<feature type="chain" id="PRO_0000066556" description="Putative uncharacterized protein Z">
    <location>
        <begin position="1"/>
        <end position="79"/>
    </location>
</feature>
<protein>
    <recommendedName>
        <fullName>Putative uncharacterized protein Z</fullName>
    </recommendedName>
</protein>
<accession>P08105</accession>
<keyword id="KW-1185">Reference proteome</keyword>
<name>Z_SHEEP</name>